<keyword id="KW-0030">Aminoacyl-tRNA synthetase</keyword>
<keyword id="KW-0067">ATP-binding</keyword>
<keyword id="KW-0963">Cytoplasm</keyword>
<keyword id="KW-0436">Ligase</keyword>
<keyword id="KW-0547">Nucleotide-binding</keyword>
<keyword id="KW-0648">Protein biosynthesis</keyword>
<dbReference type="EC" id="6.1.1.21"/>
<dbReference type="EMBL" id="CP000088">
    <property type="protein sequence ID" value="AAZ54797.1"/>
    <property type="molecule type" value="Genomic_DNA"/>
</dbReference>
<dbReference type="RefSeq" id="WP_011291206.1">
    <property type="nucleotide sequence ID" value="NC_007333.1"/>
</dbReference>
<dbReference type="SMR" id="Q47RX0"/>
<dbReference type="STRING" id="269800.Tfu_0759"/>
<dbReference type="KEGG" id="tfu:Tfu_0759"/>
<dbReference type="eggNOG" id="COG0124">
    <property type="taxonomic scope" value="Bacteria"/>
</dbReference>
<dbReference type="HOGENOM" id="CLU_025113_3_0_11"/>
<dbReference type="OrthoDB" id="9800814at2"/>
<dbReference type="GO" id="GO:0005737">
    <property type="term" value="C:cytoplasm"/>
    <property type="evidence" value="ECO:0007669"/>
    <property type="project" value="UniProtKB-SubCell"/>
</dbReference>
<dbReference type="GO" id="GO:0005524">
    <property type="term" value="F:ATP binding"/>
    <property type="evidence" value="ECO:0007669"/>
    <property type="project" value="UniProtKB-KW"/>
</dbReference>
<dbReference type="GO" id="GO:0004821">
    <property type="term" value="F:histidine-tRNA ligase activity"/>
    <property type="evidence" value="ECO:0007669"/>
    <property type="project" value="UniProtKB-EC"/>
</dbReference>
<dbReference type="GO" id="GO:0006427">
    <property type="term" value="P:histidyl-tRNA aminoacylation"/>
    <property type="evidence" value="ECO:0007669"/>
    <property type="project" value="InterPro"/>
</dbReference>
<dbReference type="CDD" id="cd00773">
    <property type="entry name" value="HisRS-like_core"/>
    <property type="match status" value="1"/>
</dbReference>
<dbReference type="Gene3D" id="3.40.50.800">
    <property type="entry name" value="Anticodon-binding domain"/>
    <property type="match status" value="1"/>
</dbReference>
<dbReference type="Gene3D" id="3.30.930.10">
    <property type="entry name" value="Bira Bifunctional Protein, Domain 2"/>
    <property type="match status" value="1"/>
</dbReference>
<dbReference type="InterPro" id="IPR006195">
    <property type="entry name" value="aa-tRNA-synth_II"/>
</dbReference>
<dbReference type="InterPro" id="IPR045864">
    <property type="entry name" value="aa-tRNA-synth_II/BPL/LPL"/>
</dbReference>
<dbReference type="InterPro" id="IPR004154">
    <property type="entry name" value="Anticodon-bd"/>
</dbReference>
<dbReference type="InterPro" id="IPR036621">
    <property type="entry name" value="Anticodon-bd_dom_sf"/>
</dbReference>
<dbReference type="InterPro" id="IPR015807">
    <property type="entry name" value="His-tRNA-ligase"/>
</dbReference>
<dbReference type="InterPro" id="IPR041715">
    <property type="entry name" value="HisRS-like_core"/>
</dbReference>
<dbReference type="InterPro" id="IPR004516">
    <property type="entry name" value="HisRS/HisZ"/>
</dbReference>
<dbReference type="NCBIfam" id="TIGR00442">
    <property type="entry name" value="hisS"/>
    <property type="match status" value="1"/>
</dbReference>
<dbReference type="PANTHER" id="PTHR11476:SF7">
    <property type="entry name" value="HISTIDINE--TRNA LIGASE"/>
    <property type="match status" value="1"/>
</dbReference>
<dbReference type="PANTHER" id="PTHR11476">
    <property type="entry name" value="HISTIDYL-TRNA SYNTHETASE"/>
    <property type="match status" value="1"/>
</dbReference>
<dbReference type="Pfam" id="PF03129">
    <property type="entry name" value="HGTP_anticodon"/>
    <property type="match status" value="1"/>
</dbReference>
<dbReference type="Pfam" id="PF13393">
    <property type="entry name" value="tRNA-synt_His"/>
    <property type="match status" value="1"/>
</dbReference>
<dbReference type="PIRSF" id="PIRSF001549">
    <property type="entry name" value="His-tRNA_synth"/>
    <property type="match status" value="1"/>
</dbReference>
<dbReference type="SUPFAM" id="SSF52954">
    <property type="entry name" value="Class II aaRS ABD-related"/>
    <property type="match status" value="1"/>
</dbReference>
<dbReference type="SUPFAM" id="SSF55681">
    <property type="entry name" value="Class II aaRS and biotin synthetases"/>
    <property type="match status" value="1"/>
</dbReference>
<dbReference type="PROSITE" id="PS50862">
    <property type="entry name" value="AA_TRNA_LIGASE_II"/>
    <property type="match status" value="1"/>
</dbReference>
<protein>
    <recommendedName>
        <fullName>Histidine--tRNA ligase</fullName>
        <ecNumber>6.1.1.21</ecNumber>
    </recommendedName>
    <alternativeName>
        <fullName>Histidyl-tRNA synthetase</fullName>
        <shortName>HisRS</shortName>
    </alternativeName>
</protein>
<evidence type="ECO:0000250" key="1"/>
<evidence type="ECO:0000305" key="2"/>
<name>SYH_THEFY</name>
<reference key="1">
    <citation type="journal article" date="2007" name="J. Bacteriol.">
        <title>Genome sequence and analysis of the soil cellulolytic actinomycete Thermobifida fusca YX.</title>
        <authorList>
            <person name="Lykidis A."/>
            <person name="Mavromatis K."/>
            <person name="Ivanova N."/>
            <person name="Anderson I."/>
            <person name="Land M."/>
            <person name="DiBartolo G."/>
            <person name="Martinez M."/>
            <person name="Lapidus A."/>
            <person name="Lucas S."/>
            <person name="Copeland A."/>
            <person name="Richardson P."/>
            <person name="Wilson D.B."/>
            <person name="Kyrpides N."/>
        </authorList>
    </citation>
    <scope>NUCLEOTIDE SEQUENCE [LARGE SCALE GENOMIC DNA]</scope>
    <source>
        <strain>YX</strain>
    </source>
</reference>
<comment type="catalytic activity">
    <reaction>
        <text>tRNA(His) + L-histidine + ATP = L-histidyl-tRNA(His) + AMP + diphosphate + H(+)</text>
        <dbReference type="Rhea" id="RHEA:17313"/>
        <dbReference type="Rhea" id="RHEA-COMP:9665"/>
        <dbReference type="Rhea" id="RHEA-COMP:9689"/>
        <dbReference type="ChEBI" id="CHEBI:15378"/>
        <dbReference type="ChEBI" id="CHEBI:30616"/>
        <dbReference type="ChEBI" id="CHEBI:33019"/>
        <dbReference type="ChEBI" id="CHEBI:57595"/>
        <dbReference type="ChEBI" id="CHEBI:78442"/>
        <dbReference type="ChEBI" id="CHEBI:78527"/>
        <dbReference type="ChEBI" id="CHEBI:456215"/>
        <dbReference type="EC" id="6.1.1.21"/>
    </reaction>
</comment>
<comment type="subunit">
    <text evidence="1">Homodimer.</text>
</comment>
<comment type="subcellular location">
    <subcellularLocation>
        <location evidence="1">Cytoplasm</location>
    </subcellularLocation>
</comment>
<comment type="similarity">
    <text evidence="2">Belongs to the class-II aminoacyl-tRNA synthetase family.</text>
</comment>
<feature type="chain" id="PRO_0000136281" description="Histidine--tRNA ligase">
    <location>
        <begin position="1"/>
        <end position="438"/>
    </location>
</feature>
<sequence>MSEQRIIRPTPISGFPEWTPRIRSVELRWLDHIRRGFERYGFSSVETPSVEVLDVLLSKGETSQEIYTLQRLQADADDSSDARLGLHFDLTVPFARYVAQHFNDLVFPFKRYQIQRVWRGERPQEGRFREFTQCDIDVINVDRIPLHFDAELPRIVHEVLTGLDIPAWTLNINNRKVLQGFYEGLGITDPLAVIRAVDKLHKIGADAVREILIDQAGLSSDQAAACLELAEIRGSDTTVVDAVAKLGVSHPTLTAGLDELGEVLDELSDLPSGSVVADLSIARGLDYYTGTVYEATFNDDPGYGSICAGGRYENLAGQFIRRSLPGVGISIGLTRIFAKLVSEGRITGGRFCPTDVLVVLPSDERRSAALAVAAQLRERGFNTEVYHQAAKIGKQIQYAVKKDIPFVWFPPFDDGRPHEVKNLATGEQVEADPASWNG</sequence>
<accession>Q47RX0</accession>
<proteinExistence type="inferred from homology"/>
<gene>
    <name type="primary">hisS</name>
    <name type="ordered locus">Tfu_0759</name>
</gene>
<organism>
    <name type="scientific">Thermobifida fusca (strain YX)</name>
    <dbReference type="NCBI Taxonomy" id="269800"/>
    <lineage>
        <taxon>Bacteria</taxon>
        <taxon>Bacillati</taxon>
        <taxon>Actinomycetota</taxon>
        <taxon>Actinomycetes</taxon>
        <taxon>Streptosporangiales</taxon>
        <taxon>Nocardiopsidaceae</taxon>
        <taxon>Thermobifida</taxon>
    </lineage>
</organism>